<sequence length="306" mass="33212">MEAEAAMAAAAAATGAVRVEKVRGRSAVTRCFAKYPLKLIAPSKAGRASSGAAWLYAITYGGGIVSGDIISCTVAVGDGCAAAMTTQASTKVYKAVDSKCSEQVLEARVGEDALFALIPDPVTCFSMARYHQKQVFHVFPNSNLVVVDWFTSGRYESGEKWNFSFYKSINHILLEDQPLFIDSVLLEQSSNFSIADRMQEYNVVAMVILLGPKLKHIQDQMQDEVKKMMSVQLRPPTSAGGRYSTRSQPLHPQRPPIIASCSPFGRMGTGMVARITAVSTESVYSFLRHHLAALEPFLGACPYPAS</sequence>
<evidence type="ECO:0000250" key="1"/>
<evidence type="ECO:0000269" key="2">
    <source>
    </source>
</evidence>
<evidence type="ECO:0000305" key="3"/>
<proteinExistence type="evidence at transcript level"/>
<feature type="chain" id="PRO_0000424250" description="Urease accessory protein D">
    <location>
        <begin position="1"/>
        <end position="306"/>
    </location>
</feature>
<dbReference type="EMBL" id="HM369057">
    <property type="protein sequence ID" value="ADK73996.1"/>
    <property type="molecule type" value="mRNA"/>
</dbReference>
<dbReference type="SMR" id="E0ZS45"/>
<dbReference type="EnsemblPlants" id="OsIR64_02g0005450.01">
    <property type="protein sequence ID" value="OsIR64_02g0005450.01"/>
    <property type="gene ID" value="OsIR64_02g0005450"/>
</dbReference>
<dbReference type="Gramene" id="OsIR64_02g0005450.01">
    <property type="protein sequence ID" value="OsIR64_02g0005450.01"/>
    <property type="gene ID" value="OsIR64_02g0005450"/>
</dbReference>
<dbReference type="GO" id="GO:0016151">
    <property type="term" value="F:nickel cation binding"/>
    <property type="evidence" value="ECO:0007669"/>
    <property type="project" value="InterPro"/>
</dbReference>
<dbReference type="GO" id="GO:0051604">
    <property type="term" value="P:protein maturation"/>
    <property type="evidence" value="ECO:0000314"/>
    <property type="project" value="UniProtKB"/>
</dbReference>
<dbReference type="HAMAP" id="MF_01384">
    <property type="entry name" value="UreD"/>
    <property type="match status" value="1"/>
</dbReference>
<dbReference type="InterPro" id="IPR002669">
    <property type="entry name" value="UreD"/>
</dbReference>
<dbReference type="PANTHER" id="PTHR33643">
    <property type="entry name" value="UREASE ACCESSORY PROTEIN D"/>
    <property type="match status" value="1"/>
</dbReference>
<dbReference type="PANTHER" id="PTHR33643:SF1">
    <property type="entry name" value="UREASE ACCESSORY PROTEIN D"/>
    <property type="match status" value="1"/>
</dbReference>
<dbReference type="Pfam" id="PF01774">
    <property type="entry name" value="UreD"/>
    <property type="match status" value="1"/>
</dbReference>
<accession>E0ZS45</accession>
<gene>
    <name type="primary">URED</name>
</gene>
<keyword id="KW-0143">Chaperone</keyword>
<keyword id="KW-0996">Nickel insertion</keyword>
<name>URED_ORYSI</name>
<organism>
    <name type="scientific">Oryza sativa subsp. indica</name>
    <name type="common">Rice</name>
    <dbReference type="NCBI Taxonomy" id="39946"/>
    <lineage>
        <taxon>Eukaryota</taxon>
        <taxon>Viridiplantae</taxon>
        <taxon>Streptophyta</taxon>
        <taxon>Embryophyta</taxon>
        <taxon>Tracheophyta</taxon>
        <taxon>Spermatophyta</taxon>
        <taxon>Magnoliopsida</taxon>
        <taxon>Liliopsida</taxon>
        <taxon>Poales</taxon>
        <taxon>Poaceae</taxon>
        <taxon>BOP clade</taxon>
        <taxon>Oryzoideae</taxon>
        <taxon>Oryzeae</taxon>
        <taxon>Oryzinae</taxon>
        <taxon>Oryza</taxon>
        <taxon>Oryza sativa</taxon>
    </lineage>
</organism>
<comment type="function">
    <text evidence="2">Required for the maturation and activation of urease via the functional incorporation of the urease nickel metallocenter.</text>
</comment>
<comment type="subunit">
    <text evidence="1">URED, UREF and UREG may form a complex that acts as a GTP-hydrolysis-dependent molecular chaperone, activating the urease apoprotein.</text>
</comment>
<comment type="similarity">
    <text evidence="3">Belongs to the UreD family.</text>
</comment>
<protein>
    <recommendedName>
        <fullName>Urease accessory protein D</fullName>
        <shortName>AtURED</shortName>
    </recommendedName>
</protein>
<reference key="1">
    <citation type="journal article" date="2010" name="Plant Physiol.">
        <title>Identification and characterization of proteins involved in rice urea and arginine catabolism.</title>
        <authorList>
            <person name="Cao F.Q."/>
            <person name="Werner A.K."/>
            <person name="Dahncke K."/>
            <person name="Romeis T."/>
            <person name="Liu L.H."/>
            <person name="Witte C.P."/>
        </authorList>
    </citation>
    <scope>NUCLEOTIDE SEQUENCE [MRNA]</scope>
    <scope>FUNCTION</scope>
    <source>
        <strain>cv. Hunan Late 2</strain>
    </source>
</reference>